<organism>
    <name type="scientific">Homo sapiens</name>
    <name type="common">Human</name>
    <dbReference type="NCBI Taxonomy" id="9606"/>
    <lineage>
        <taxon>Eukaryota</taxon>
        <taxon>Metazoa</taxon>
        <taxon>Chordata</taxon>
        <taxon>Craniata</taxon>
        <taxon>Vertebrata</taxon>
        <taxon>Euteleostomi</taxon>
        <taxon>Mammalia</taxon>
        <taxon>Eutheria</taxon>
        <taxon>Euarchontoglires</taxon>
        <taxon>Primates</taxon>
        <taxon>Haplorrhini</taxon>
        <taxon>Catarrhini</taxon>
        <taxon>Hominidae</taxon>
        <taxon>Homo</taxon>
    </lineage>
</organism>
<gene>
    <name evidence="14" type="primary">PDZK1IP1</name>
    <name evidence="7 8" type="synonym">MAP17</name>
</gene>
<protein>
    <recommendedName>
        <fullName>PDZK1-interacting protein 1</fullName>
    </recommendedName>
    <alternativeName>
        <fullName>17 kDa membrane-associated protein</fullName>
    </alternativeName>
    <alternativeName>
        <fullName>Protein DD96</fullName>
    </alternativeName>
</protein>
<evidence type="ECO:0000250" key="1">
    <source>
        <dbReference type="UniProtKB" id="Q9CQH0"/>
    </source>
</evidence>
<evidence type="ECO:0000256" key="2">
    <source>
        <dbReference type="SAM" id="MobiDB-lite"/>
    </source>
</evidence>
<evidence type="ECO:0000269" key="3">
    <source>
    </source>
</evidence>
<evidence type="ECO:0000269" key="4">
    <source>
    </source>
</evidence>
<evidence type="ECO:0000269" key="5">
    <source>
    </source>
</evidence>
<evidence type="ECO:0000269" key="6">
    <source>
    </source>
</evidence>
<evidence type="ECO:0000303" key="7">
    <source>
    </source>
</evidence>
<evidence type="ECO:0000303" key="8">
    <source>
    </source>
</evidence>
<evidence type="ECO:0000305" key="9"/>
<evidence type="ECO:0000305" key="10">
    <source>
    </source>
</evidence>
<evidence type="ECO:0000305" key="11">
    <source>
    </source>
</evidence>
<evidence type="ECO:0000305" key="12">
    <source>
    </source>
</evidence>
<evidence type="ECO:0000305" key="13">
    <source>
    </source>
</evidence>
<evidence type="ECO:0000312" key="14">
    <source>
        <dbReference type="HGNC" id="HGNC:16887"/>
    </source>
</evidence>
<evidence type="ECO:0007744" key="15">
    <source>
        <dbReference type="PDB" id="7VSI"/>
    </source>
</evidence>
<evidence type="ECO:0007744" key="16">
    <source>
        <dbReference type="PDB" id="7YNI"/>
    </source>
</evidence>
<evidence type="ECO:0007744" key="17">
    <source>
        <dbReference type="PDB" id="7YNJ"/>
    </source>
</evidence>
<evidence type="ECO:0007744" key="18">
    <source>
        <dbReference type="PDB" id="7YNK"/>
    </source>
</evidence>
<evidence type="ECO:0007744" key="19">
    <source>
        <dbReference type="PDB" id="8HB0"/>
    </source>
</evidence>
<evidence type="ECO:0007744" key="20">
    <source>
        <dbReference type="PDB" id="8HDH"/>
    </source>
</evidence>
<evidence type="ECO:0007744" key="21">
    <source>
        <dbReference type="PDB" id="8HEZ"/>
    </source>
</evidence>
<evidence type="ECO:0007744" key="22">
    <source>
        <dbReference type="PDB" id="8HG7"/>
    </source>
</evidence>
<evidence type="ECO:0007744" key="23">
    <source>
        <dbReference type="PDB" id="8HIN"/>
    </source>
</evidence>
<evidence type="ECO:0007829" key="24">
    <source>
        <dbReference type="PDB" id="8HEZ"/>
    </source>
</evidence>
<keyword id="KW-0002">3D-structure</keyword>
<keyword id="KW-1003">Cell membrane</keyword>
<keyword id="KW-0472">Membrane</keyword>
<keyword id="KW-0597">Phosphoprotein</keyword>
<keyword id="KW-1267">Proteomics identification</keyword>
<keyword id="KW-1185">Reference proteome</keyword>
<keyword id="KW-0812">Transmembrane</keyword>
<keyword id="KW-1133">Transmembrane helix</keyword>
<reference key="1">
    <citation type="journal article" date="1995" name="Clin. Cancer Res.">
        <title>Identification of a novel gene, selectively up-regulated in human carcinomas, using the differential display technique.</title>
        <authorList>
            <person name="Kocher O."/>
            <person name="Cheresh P."/>
            <person name="Brown L.F."/>
            <person name="Lee S.W."/>
        </authorList>
    </citation>
    <scope>NUCLEOTIDE SEQUENCE [MRNA]</scope>
    <source>
        <tissue>Kidney</tissue>
    </source>
</reference>
<reference key="2">
    <citation type="submission" date="2004-05" db="EMBL/GenBank/DDBJ databases">
        <title>Cloning of human full open reading frames in Gateway(TM) system entry vector (pDONR201).</title>
        <authorList>
            <person name="Ebert L."/>
            <person name="Schick M."/>
            <person name="Neubert P."/>
            <person name="Schatten R."/>
            <person name="Henze S."/>
            <person name="Korn B."/>
        </authorList>
    </citation>
    <scope>NUCLEOTIDE SEQUENCE [LARGE SCALE MRNA]</scope>
</reference>
<reference key="3">
    <citation type="journal article" date="2006" name="Nature">
        <title>The DNA sequence and biological annotation of human chromosome 1.</title>
        <authorList>
            <person name="Gregory S.G."/>
            <person name="Barlow K.F."/>
            <person name="McLay K.E."/>
            <person name="Kaul R."/>
            <person name="Swarbreck D."/>
            <person name="Dunham A."/>
            <person name="Scott C.E."/>
            <person name="Howe K.L."/>
            <person name="Woodfine K."/>
            <person name="Spencer C.C.A."/>
            <person name="Jones M.C."/>
            <person name="Gillson C."/>
            <person name="Searle S."/>
            <person name="Zhou Y."/>
            <person name="Kokocinski F."/>
            <person name="McDonald L."/>
            <person name="Evans R."/>
            <person name="Phillips K."/>
            <person name="Atkinson A."/>
            <person name="Cooper R."/>
            <person name="Jones C."/>
            <person name="Hall R.E."/>
            <person name="Andrews T.D."/>
            <person name="Lloyd C."/>
            <person name="Ainscough R."/>
            <person name="Almeida J.P."/>
            <person name="Ambrose K.D."/>
            <person name="Anderson F."/>
            <person name="Andrew R.W."/>
            <person name="Ashwell R.I.S."/>
            <person name="Aubin K."/>
            <person name="Babbage A.K."/>
            <person name="Bagguley C.L."/>
            <person name="Bailey J."/>
            <person name="Beasley H."/>
            <person name="Bethel G."/>
            <person name="Bird C.P."/>
            <person name="Bray-Allen S."/>
            <person name="Brown J.Y."/>
            <person name="Brown A.J."/>
            <person name="Buckley D."/>
            <person name="Burton J."/>
            <person name="Bye J."/>
            <person name="Carder C."/>
            <person name="Chapman J.C."/>
            <person name="Clark S.Y."/>
            <person name="Clarke G."/>
            <person name="Clee C."/>
            <person name="Cobley V."/>
            <person name="Collier R.E."/>
            <person name="Corby N."/>
            <person name="Coville G.J."/>
            <person name="Davies J."/>
            <person name="Deadman R."/>
            <person name="Dunn M."/>
            <person name="Earthrowl M."/>
            <person name="Ellington A.G."/>
            <person name="Errington H."/>
            <person name="Frankish A."/>
            <person name="Frankland J."/>
            <person name="French L."/>
            <person name="Garner P."/>
            <person name="Garnett J."/>
            <person name="Gay L."/>
            <person name="Ghori M.R.J."/>
            <person name="Gibson R."/>
            <person name="Gilby L.M."/>
            <person name="Gillett W."/>
            <person name="Glithero R.J."/>
            <person name="Grafham D.V."/>
            <person name="Griffiths C."/>
            <person name="Griffiths-Jones S."/>
            <person name="Grocock R."/>
            <person name="Hammond S."/>
            <person name="Harrison E.S.I."/>
            <person name="Hart E."/>
            <person name="Haugen E."/>
            <person name="Heath P.D."/>
            <person name="Holmes S."/>
            <person name="Holt K."/>
            <person name="Howden P.J."/>
            <person name="Hunt A.R."/>
            <person name="Hunt S.E."/>
            <person name="Hunter G."/>
            <person name="Isherwood J."/>
            <person name="James R."/>
            <person name="Johnson C."/>
            <person name="Johnson D."/>
            <person name="Joy A."/>
            <person name="Kay M."/>
            <person name="Kershaw J.K."/>
            <person name="Kibukawa M."/>
            <person name="Kimberley A.M."/>
            <person name="King A."/>
            <person name="Knights A.J."/>
            <person name="Lad H."/>
            <person name="Laird G."/>
            <person name="Lawlor S."/>
            <person name="Leongamornlert D.A."/>
            <person name="Lloyd D.M."/>
            <person name="Loveland J."/>
            <person name="Lovell J."/>
            <person name="Lush M.J."/>
            <person name="Lyne R."/>
            <person name="Martin S."/>
            <person name="Mashreghi-Mohammadi M."/>
            <person name="Matthews L."/>
            <person name="Matthews N.S.W."/>
            <person name="McLaren S."/>
            <person name="Milne S."/>
            <person name="Mistry S."/>
            <person name="Moore M.J.F."/>
            <person name="Nickerson T."/>
            <person name="O'Dell C.N."/>
            <person name="Oliver K."/>
            <person name="Palmeiri A."/>
            <person name="Palmer S.A."/>
            <person name="Parker A."/>
            <person name="Patel D."/>
            <person name="Pearce A.V."/>
            <person name="Peck A.I."/>
            <person name="Pelan S."/>
            <person name="Phelps K."/>
            <person name="Phillimore B.J."/>
            <person name="Plumb R."/>
            <person name="Rajan J."/>
            <person name="Raymond C."/>
            <person name="Rouse G."/>
            <person name="Saenphimmachak C."/>
            <person name="Sehra H.K."/>
            <person name="Sheridan E."/>
            <person name="Shownkeen R."/>
            <person name="Sims S."/>
            <person name="Skuce C.D."/>
            <person name="Smith M."/>
            <person name="Steward C."/>
            <person name="Subramanian S."/>
            <person name="Sycamore N."/>
            <person name="Tracey A."/>
            <person name="Tromans A."/>
            <person name="Van Helmond Z."/>
            <person name="Wall M."/>
            <person name="Wallis J.M."/>
            <person name="White S."/>
            <person name="Whitehead S.L."/>
            <person name="Wilkinson J.E."/>
            <person name="Willey D.L."/>
            <person name="Williams H."/>
            <person name="Wilming L."/>
            <person name="Wray P.W."/>
            <person name="Wu Z."/>
            <person name="Coulson A."/>
            <person name="Vaudin M."/>
            <person name="Sulston J.E."/>
            <person name="Durbin R.M."/>
            <person name="Hubbard T."/>
            <person name="Wooster R."/>
            <person name="Dunham I."/>
            <person name="Carter N.P."/>
            <person name="McVean G."/>
            <person name="Ross M.T."/>
            <person name="Harrow J."/>
            <person name="Olson M.V."/>
            <person name="Beck S."/>
            <person name="Rogers J."/>
            <person name="Bentley D.R."/>
        </authorList>
    </citation>
    <scope>NUCLEOTIDE SEQUENCE [LARGE SCALE GENOMIC DNA]</scope>
</reference>
<reference key="4">
    <citation type="submission" date="2005-09" db="EMBL/GenBank/DDBJ databases">
        <authorList>
            <person name="Mural R.J."/>
            <person name="Istrail S."/>
            <person name="Sutton G.G."/>
            <person name="Florea L."/>
            <person name="Halpern A.L."/>
            <person name="Mobarry C.M."/>
            <person name="Lippert R."/>
            <person name="Walenz B."/>
            <person name="Shatkay H."/>
            <person name="Dew I."/>
            <person name="Miller J.R."/>
            <person name="Flanigan M.J."/>
            <person name="Edwards N.J."/>
            <person name="Bolanos R."/>
            <person name="Fasulo D."/>
            <person name="Halldorsson B.V."/>
            <person name="Hannenhalli S."/>
            <person name="Turner R."/>
            <person name="Yooseph S."/>
            <person name="Lu F."/>
            <person name="Nusskern D.R."/>
            <person name="Shue B.C."/>
            <person name="Zheng X.H."/>
            <person name="Zhong F."/>
            <person name="Delcher A.L."/>
            <person name="Huson D.H."/>
            <person name="Kravitz S.A."/>
            <person name="Mouchard L."/>
            <person name="Reinert K."/>
            <person name="Remington K.A."/>
            <person name="Clark A.G."/>
            <person name="Waterman M.S."/>
            <person name="Eichler E.E."/>
            <person name="Adams M.D."/>
            <person name="Hunkapiller M.W."/>
            <person name="Myers E.W."/>
            <person name="Venter J.C."/>
        </authorList>
    </citation>
    <scope>NUCLEOTIDE SEQUENCE [LARGE SCALE GENOMIC DNA]</scope>
</reference>
<reference key="5">
    <citation type="journal article" date="2004" name="Genome Res.">
        <title>The status, quality, and expansion of the NIH full-length cDNA project: the Mammalian Gene Collection (MGC).</title>
        <authorList>
            <consortium name="The MGC Project Team"/>
        </authorList>
    </citation>
    <scope>NUCLEOTIDE SEQUENCE [LARGE SCALE MRNA]</scope>
    <source>
        <tissue>Kidney</tissue>
    </source>
</reference>
<reference key="6">
    <citation type="journal article" date="1996" name="Am. J. Pathol.">
        <title>Identification and partial characterization of a novel membrane-associated protein (MAP17) up-regulated in human carcinomas and modulating cell replication and tumor growth.</title>
        <authorList>
            <person name="Kocher O."/>
            <person name="Cheresh P."/>
            <person name="Lee S.W."/>
        </authorList>
    </citation>
    <scope>SUBCELLULAR LOCATION</scope>
</reference>
<reference key="7">
    <citation type="journal article" date="1998" name="Lab. Invest.">
        <title>Identification and partial characterization of PDZK1: a novel protein containing PDZ interaction domains.</title>
        <authorList>
            <person name="Kocher O."/>
            <person name="Comella N."/>
            <person name="Tognazzi K."/>
            <person name="Brown L.F."/>
        </authorList>
    </citation>
    <scope>INTERACTION WITH PDZK1</scope>
</reference>
<reference evidence="15" key="8">
    <citation type="journal article" date="2022" name="Nature">
        <title>Structural basis of inhibition of the human SGLT2-MAP17 glucose transporter.</title>
        <authorList>
            <person name="Niu Y."/>
            <person name="Liu R."/>
            <person name="Guan C."/>
            <person name="Zhang Y."/>
            <person name="Chen Z."/>
            <person name="Hoerer S."/>
            <person name="Nar H."/>
            <person name="Chen L."/>
        </authorList>
    </citation>
    <scope>STRUCTURE BY ELECTRON MICROSCOPY (2.95 ANGSTROMS) OF 1-56 IN COMPLEX WITH SLC5A2/SGLT2 AND INHIBITOR EMPAGLIFLOZIN</scope>
    <scope>FUNCTION</scope>
    <scope>INTERACTION WITH SLC5A2/SGLT2</scope>
    <scope>SUBCELLULAR LOCATION</scope>
    <scope>TOPOLOGY</scope>
</reference>
<reference evidence="16 17 18" key="9">
    <citation type="journal article" date="2023" name="Nat. Commun.">
        <title>Structures of human SGLT in the occluded state reveal conformational changes during sugar transport.</title>
        <authorList>
            <person name="Cui W."/>
            <person name="Niu Y."/>
            <person name="Sun Z."/>
            <person name="Liu R."/>
            <person name="Chen L."/>
        </authorList>
    </citation>
    <scope>STRUCTURE BY ELECTRON MICROSCOPY (3.26 ANGSTROMS) IN COMPLEXES WITH SLC5A1/SGLT1; SLC5A2/SGLT2 AND METHYL ALPHA-D-GALACTOPYRANOSIDE</scope>
    <scope>FUNCTION</scope>
    <scope>INTERACTION WITH SLC5A2/SGLT2</scope>
    <scope>SUBCELLULAR LOCATION</scope>
    <scope>TOPOLOGY</scope>
</reference>
<reference evidence="19 20 21 22 23" key="10">
    <citation type="journal article" date="2024" name="Nat. Struct. Mol. Biol.">
        <title>Transport and inhibition mechanism of the human SGLT2-MAP17 glucose transporter.</title>
        <authorList>
            <person name="Hiraizumi M."/>
            <person name="Akashi T."/>
            <person name="Murasaki K."/>
            <person name="Kishida H."/>
            <person name="Kumanomidou T."/>
            <person name="Torimoto N."/>
            <person name="Nureki O."/>
            <person name="Miyaguchi I."/>
        </authorList>
    </citation>
    <scope>STRUCTURE BY ELECTRON MICROSCOPY (2.80 ANGSTROMS) IN COMPLEXES WITH SLC5A2/SGLT2 AND INHIBITORS</scope>
    <scope>FUNCTION</scope>
    <scope>INTERACTION WITH SLC5A2/SGLT2</scope>
    <scope>SUBCELLULAR LOCATION</scope>
    <scope>TOPOLOGY</scope>
</reference>
<feature type="chain" id="PRO_0000058282" description="PDZK1-interacting protein 1">
    <location>
        <begin position="1"/>
        <end position="114"/>
    </location>
</feature>
<feature type="topological domain" description="Extracellular" evidence="3 4 5 15 16 17 18 19 20 21 22 23">
    <location>
        <begin position="1"/>
        <end position="28"/>
    </location>
</feature>
<feature type="transmembrane region" description="Helical" evidence="3 4 5 15 16 17 18 19 20 21 22 23">
    <location>
        <begin position="29"/>
        <end position="51"/>
    </location>
</feature>
<feature type="topological domain" description="Cytoplasmic" evidence="3 4 5 15 16 17 18 19 20 21 22 23">
    <location>
        <begin position="52"/>
        <end position="114"/>
    </location>
</feature>
<feature type="region of interest" description="Disordered" evidence="2">
    <location>
        <begin position="94"/>
        <end position="114"/>
    </location>
</feature>
<feature type="compositionally biased region" description="Basic and acidic residues" evidence="2">
    <location>
        <begin position="105"/>
        <end position="114"/>
    </location>
</feature>
<feature type="modified residue" description="Phosphoserine" evidence="1">
    <location>
        <position position="85"/>
    </location>
</feature>
<feature type="sequence conflict" description="In Ref. 5; AAH12303." evidence="9" ref="5">
    <original>T</original>
    <variation>M</variation>
    <location>
        <position position="13"/>
    </location>
</feature>
<feature type="sequence conflict" description="In Ref. 5; AAH12303." evidence="9" ref="5">
    <original>N</original>
    <variation>K</variation>
    <location>
        <position position="51"/>
    </location>
</feature>
<feature type="helix" evidence="24">
    <location>
        <begin position="29"/>
        <end position="54"/>
    </location>
</feature>
<name>PDZ1I_HUMAN</name>
<proteinExistence type="evidence at protein level"/>
<dbReference type="EMBL" id="U21049">
    <property type="protein sequence ID" value="AAA92690.1"/>
    <property type="molecule type" value="mRNA"/>
</dbReference>
<dbReference type="EMBL" id="CR450304">
    <property type="protein sequence ID" value="CAG29300.1"/>
    <property type="molecule type" value="mRNA"/>
</dbReference>
<dbReference type="EMBL" id="AL135960">
    <property type="protein sequence ID" value="CAB72104.1"/>
    <property type="molecule type" value="Genomic_DNA"/>
</dbReference>
<dbReference type="EMBL" id="CH471059">
    <property type="protein sequence ID" value="EAX06878.1"/>
    <property type="molecule type" value="Genomic_DNA"/>
</dbReference>
<dbReference type="EMBL" id="BC012303">
    <property type="protein sequence ID" value="AAH12303.1"/>
    <property type="molecule type" value="mRNA"/>
</dbReference>
<dbReference type="CCDS" id="CCDS546.1"/>
<dbReference type="RefSeq" id="NP_005755.1">
    <property type="nucleotide sequence ID" value="NM_005764.4"/>
</dbReference>
<dbReference type="PDB" id="7VSI">
    <property type="method" value="EM"/>
    <property type="resolution" value="2.95 A"/>
    <property type="chains" value="B=1-56"/>
</dbReference>
<dbReference type="PDB" id="7WMV">
    <property type="method" value="EM"/>
    <property type="resolution" value="3.20 A"/>
    <property type="chains" value="B=1-114"/>
</dbReference>
<dbReference type="PDB" id="7YNI">
    <property type="method" value="EM"/>
    <property type="resolution" value="3.50 A"/>
    <property type="chains" value="B=1-114"/>
</dbReference>
<dbReference type="PDB" id="7YNJ">
    <property type="method" value="EM"/>
    <property type="resolution" value="3.33 A"/>
    <property type="chains" value="B=1-114"/>
</dbReference>
<dbReference type="PDB" id="7YNK">
    <property type="method" value="EM"/>
    <property type="resolution" value="3.48 A"/>
    <property type="chains" value="B=1-114"/>
</dbReference>
<dbReference type="PDB" id="8HB0">
    <property type="method" value="EM"/>
    <property type="resolution" value="2.90 A"/>
    <property type="chains" value="B=1-114"/>
</dbReference>
<dbReference type="PDB" id="8HDH">
    <property type="method" value="EM"/>
    <property type="resolution" value="3.10 A"/>
    <property type="chains" value="B=1-114"/>
</dbReference>
<dbReference type="PDB" id="8HEZ">
    <property type="method" value="EM"/>
    <property type="resolution" value="2.80 A"/>
    <property type="chains" value="B=1-114"/>
</dbReference>
<dbReference type="PDB" id="8HG7">
    <property type="method" value="EM"/>
    <property type="resolution" value="3.10 A"/>
    <property type="chains" value="B=1-114"/>
</dbReference>
<dbReference type="PDB" id="8HIN">
    <property type="method" value="EM"/>
    <property type="resolution" value="3.30 A"/>
    <property type="chains" value="B=1-114"/>
</dbReference>
<dbReference type="PDBsum" id="7VSI"/>
<dbReference type="PDBsum" id="7WMV"/>
<dbReference type="PDBsum" id="7YNI"/>
<dbReference type="PDBsum" id="7YNJ"/>
<dbReference type="PDBsum" id="7YNK"/>
<dbReference type="PDBsum" id="8HB0"/>
<dbReference type="PDBsum" id="8HDH"/>
<dbReference type="PDBsum" id="8HEZ"/>
<dbReference type="PDBsum" id="8HG7"/>
<dbReference type="PDBsum" id="8HIN"/>
<dbReference type="EMDB" id="EMD-32617"/>
<dbReference type="EMDB" id="EMD-33962"/>
<dbReference type="EMDB" id="EMD-33963"/>
<dbReference type="EMDB" id="EMD-33964"/>
<dbReference type="EMDB" id="EMD-34610"/>
<dbReference type="EMDB" id="EMD-34673"/>
<dbReference type="EMDB" id="EMD-34705"/>
<dbReference type="EMDB" id="EMD-34737"/>
<dbReference type="EMDB" id="EMD-34823"/>
<dbReference type="SMR" id="Q13113"/>
<dbReference type="BioGRID" id="115460">
    <property type="interactions" value="77"/>
</dbReference>
<dbReference type="ComplexPortal" id="CPX-8879">
    <property type="entry name" value="SGLT2-MAP17 glucose cotransporter complex"/>
</dbReference>
<dbReference type="CORUM" id="Q13113"/>
<dbReference type="FunCoup" id="Q13113">
    <property type="interactions" value="98"/>
</dbReference>
<dbReference type="IntAct" id="Q13113">
    <property type="interactions" value="87"/>
</dbReference>
<dbReference type="STRING" id="9606.ENSP00000294338"/>
<dbReference type="iPTMnet" id="Q13113"/>
<dbReference type="PhosphoSitePlus" id="Q13113"/>
<dbReference type="SwissPalm" id="Q13113"/>
<dbReference type="BioMuta" id="PDZK1IP1"/>
<dbReference type="DMDM" id="6225642"/>
<dbReference type="jPOST" id="Q13113"/>
<dbReference type="MassIVE" id="Q13113"/>
<dbReference type="PaxDb" id="9606-ENSP00000294338"/>
<dbReference type="PeptideAtlas" id="Q13113"/>
<dbReference type="ProteomicsDB" id="59164"/>
<dbReference type="Antibodypedia" id="2658">
    <property type="antibodies" value="27 antibodies from 12 providers"/>
</dbReference>
<dbReference type="DNASU" id="10158"/>
<dbReference type="Ensembl" id="ENST00000294338.7">
    <property type="protein sequence ID" value="ENSP00000294338.2"/>
    <property type="gene ID" value="ENSG00000162366.8"/>
</dbReference>
<dbReference type="Ensembl" id="ENST00000371885.1">
    <property type="protein sequence ID" value="ENSP00000360952.1"/>
    <property type="gene ID" value="ENSG00000162366.8"/>
</dbReference>
<dbReference type="GeneID" id="10158"/>
<dbReference type="KEGG" id="hsa:10158"/>
<dbReference type="MANE-Select" id="ENST00000294338.7">
    <property type="protein sequence ID" value="ENSP00000294338.2"/>
    <property type="RefSeq nucleotide sequence ID" value="NM_005764.4"/>
    <property type="RefSeq protein sequence ID" value="NP_005755.1"/>
</dbReference>
<dbReference type="UCSC" id="uc001cqw.4">
    <property type="organism name" value="human"/>
</dbReference>
<dbReference type="AGR" id="HGNC:16887"/>
<dbReference type="CTD" id="10158"/>
<dbReference type="DisGeNET" id="10158"/>
<dbReference type="GeneCards" id="PDZK1IP1"/>
<dbReference type="HGNC" id="HGNC:16887">
    <property type="gene designation" value="PDZK1IP1"/>
</dbReference>
<dbReference type="HPA" id="ENSG00000162366">
    <property type="expression patterns" value="Tissue enriched (kidney)"/>
</dbReference>
<dbReference type="MIM" id="607178">
    <property type="type" value="gene"/>
</dbReference>
<dbReference type="neXtProt" id="NX_Q13113"/>
<dbReference type="OpenTargets" id="ENSG00000162366"/>
<dbReference type="PharmGKB" id="PA142671188"/>
<dbReference type="VEuPathDB" id="HostDB:ENSG00000162366"/>
<dbReference type="eggNOG" id="ENOG502SAPW">
    <property type="taxonomic scope" value="Eukaryota"/>
</dbReference>
<dbReference type="GeneTree" id="ENSGT00940000154660"/>
<dbReference type="HOGENOM" id="CLU_168651_0_0_1"/>
<dbReference type="InParanoid" id="Q13113"/>
<dbReference type="OMA" id="ACCQEAR"/>
<dbReference type="OrthoDB" id="9900654at2759"/>
<dbReference type="PAN-GO" id="Q13113">
    <property type="GO annotations" value="0 GO annotations based on evolutionary models"/>
</dbReference>
<dbReference type="PhylomeDB" id="Q13113"/>
<dbReference type="TreeFam" id="TF328829"/>
<dbReference type="PathwayCommons" id="Q13113"/>
<dbReference type="SignaLink" id="Q13113"/>
<dbReference type="BioGRID-ORCS" id="10158">
    <property type="hits" value="45 hits in 1145 CRISPR screens"/>
</dbReference>
<dbReference type="ChiTaRS" id="PDZK1IP1">
    <property type="organism name" value="human"/>
</dbReference>
<dbReference type="GeneWiki" id="PDZK1IP1"/>
<dbReference type="GenomeRNAi" id="10158"/>
<dbReference type="Pharos" id="Q13113">
    <property type="development level" value="Tbio"/>
</dbReference>
<dbReference type="PRO" id="PR:Q13113"/>
<dbReference type="Proteomes" id="UP000005640">
    <property type="component" value="Chromosome 1"/>
</dbReference>
<dbReference type="RNAct" id="Q13113">
    <property type="molecule type" value="protein"/>
</dbReference>
<dbReference type="Bgee" id="ENSG00000162366">
    <property type="expression patterns" value="Expressed in adult mammalian kidney and 141 other cell types or tissues"/>
</dbReference>
<dbReference type="GO" id="GO:0016324">
    <property type="term" value="C:apical plasma membrane"/>
    <property type="evidence" value="ECO:0007669"/>
    <property type="project" value="UniProtKB-SubCell"/>
</dbReference>
<dbReference type="GO" id="GO:0070062">
    <property type="term" value="C:extracellular exosome"/>
    <property type="evidence" value="ECO:0007005"/>
    <property type="project" value="UniProtKB"/>
</dbReference>
<dbReference type="InterPro" id="IPR031627">
    <property type="entry name" value="PDZK1IP1/SMIM24"/>
</dbReference>
<dbReference type="PANTHER" id="PTHR15296">
    <property type="entry name" value="MEMBRANE-ASSOCIATED PROTEIN MAP17"/>
    <property type="match status" value="1"/>
</dbReference>
<dbReference type="PANTHER" id="PTHR15296:SF0">
    <property type="entry name" value="PDZK1-INTERACTING PROTEIN 1"/>
    <property type="match status" value="1"/>
</dbReference>
<dbReference type="Pfam" id="PF15807">
    <property type="entry name" value="MAP17"/>
    <property type="match status" value="1"/>
</dbReference>
<accession>Q13113</accession>
<accession>Q6ICT9</accession>
<accession>Q96EI1</accession>
<comment type="function">
    <text evidence="3 4 5">Auxiliary protein of electrogenic Na(+)-coupled sugar symporter SLC5A2/SGLT2 and SLC5A1/SGLT1 (PubMed:34880493, PubMed:37217492, PubMed:38057552). Essential for the transporter activity of SLC5A2/SGLT2 but not SLC5A1/SGLT1 (PubMed:37217492).</text>
</comment>
<comment type="subunit">
    <text evidence="3 4 5 6">Forms a heterodimer (via N-terminal transmembrane helix) with SLC5A2/SGLT2 (via TM13); this interaction enhances SLC5A2 transporter activity (PubMed:34880493, PubMed:37217492, PubMed:38057552). Interacts with PDZK1 (PubMed:9461128).</text>
</comment>
<comment type="interaction">
    <interactant intactId="EBI-716063">
        <id>Q13113</id>
    </interactant>
    <interactant intactId="EBI-3925742">
        <id>Q8TD06</id>
        <label>AGR3</label>
    </interactant>
    <organismsDiffer>false</organismsDiffer>
    <experiments>3</experiments>
</comment>
<comment type="interaction">
    <interactant intactId="EBI-716063">
        <id>Q13113</id>
    </interactant>
    <interactant intactId="EBI-11957045">
        <id>Q9NVV5-2</id>
        <label>AIG1</label>
    </interactant>
    <organismsDiffer>false</organismsDiffer>
    <experiments>3</experiments>
</comment>
<comment type="interaction">
    <interactant intactId="EBI-716063">
        <id>Q13113</id>
    </interactant>
    <interactant intactId="EBI-1171525">
        <id>P02652</id>
        <label>APOA2</label>
    </interactant>
    <organismsDiffer>false</organismsDiffer>
    <experiments>3</experiments>
</comment>
<comment type="interaction">
    <interactant intactId="EBI-716063">
        <id>Q13113</id>
    </interactant>
    <interactant intactId="EBI-715495">
        <id>P05090</id>
        <label>APOD</label>
    </interactant>
    <organismsDiffer>false</organismsDiffer>
    <experiments>3</experiments>
</comment>
<comment type="interaction">
    <interactant intactId="EBI-716063">
        <id>Q13113</id>
    </interactant>
    <interactant intactId="EBI-77613">
        <id>P05067</id>
        <label>APP</label>
    </interactant>
    <organismsDiffer>false</organismsDiffer>
    <experiments>3</experiments>
</comment>
<comment type="interaction">
    <interactant intactId="EBI-716063">
        <id>Q13113</id>
    </interactant>
    <interactant intactId="EBI-17264467">
        <id>P05067-2</id>
        <label>APP</label>
    </interactant>
    <organismsDiffer>false</organismsDiffer>
    <experiments>3</experiments>
</comment>
<comment type="interaction">
    <interactant intactId="EBI-716063">
        <id>Q13113</id>
    </interactant>
    <interactant intactId="EBI-12701138">
        <id>P41181</id>
        <label>AQP2</label>
    </interactant>
    <organismsDiffer>false</organismsDiffer>
    <experiments>3</experiments>
</comment>
<comment type="interaction">
    <interactant intactId="EBI-716063">
        <id>Q13113</id>
    </interactant>
    <interactant intactId="EBI-13059134">
        <id>Q13520</id>
        <label>AQP6</label>
    </interactant>
    <organismsDiffer>false</organismsDiffer>
    <experiments>3</experiments>
</comment>
<comment type="interaction">
    <interactant intactId="EBI-716063">
        <id>Q13113</id>
    </interactant>
    <interactant intactId="EBI-11343438">
        <id>Q3SXY8</id>
        <label>ARL13B</label>
    </interactant>
    <organismsDiffer>false</organismsDiffer>
    <experiments>3</experiments>
</comment>
<comment type="interaction">
    <interactant intactId="EBI-716063">
        <id>Q13113</id>
    </interactant>
    <interactant intactId="EBI-1172335">
        <id>P07306</id>
        <label>ASGR1</label>
    </interactant>
    <organismsDiffer>false</organismsDiffer>
    <experiments>3</experiments>
</comment>
<comment type="interaction">
    <interactant intactId="EBI-716063">
        <id>Q13113</id>
    </interactant>
    <interactant intactId="EBI-930964">
        <id>P54253</id>
        <label>ATXN1</label>
    </interactant>
    <organismsDiffer>false</organismsDiffer>
    <experiments>6</experiments>
</comment>
<comment type="interaction">
    <interactant intactId="EBI-716063">
        <id>Q13113</id>
    </interactant>
    <interactant intactId="EBI-12822627">
        <id>O14523</id>
        <label>C2CD2L</label>
    </interactant>
    <organismsDiffer>false</organismsDiffer>
    <experiments>3</experiments>
</comment>
<comment type="interaction">
    <interactant intactId="EBI-716063">
        <id>Q13113</id>
    </interactant>
    <interactant intactId="EBI-712921">
        <id>P60033</id>
        <label>CD81</label>
    </interactant>
    <organismsDiffer>false</organismsDiffer>
    <experiments>3</experiments>
</comment>
<comment type="interaction">
    <interactant intactId="EBI-716063">
        <id>Q13113</id>
    </interactant>
    <interactant intactId="EBI-12360993">
        <id>P23141-3</id>
        <label>CES1</label>
    </interactant>
    <organismsDiffer>false</organismsDiffer>
    <experiments>3</experiments>
</comment>
<comment type="interaction">
    <interactant intactId="EBI-716063">
        <id>Q13113</id>
    </interactant>
    <interactant intactId="EBI-12256978">
        <id>Q8N6F1-2</id>
        <label>CLDN19</label>
    </interactant>
    <organismsDiffer>false</organismsDiffer>
    <experiments>3</experiments>
</comment>
<comment type="interaction">
    <interactant intactId="EBI-716063">
        <id>Q13113</id>
    </interactant>
    <interactant intactId="EBI-1058710">
        <id>O43169</id>
        <label>CYB5B</label>
    </interactant>
    <organismsDiffer>false</organismsDiffer>
    <experiments>3</experiments>
</comment>
<comment type="interaction">
    <interactant intactId="EBI-716063">
        <id>Q13113</id>
    </interactant>
    <interactant intactId="EBI-2680384">
        <id>Q9BQA9</id>
        <label>CYBC1</label>
    </interactant>
    <organismsDiffer>false</organismsDiffer>
    <experiments>3</experiments>
</comment>
<comment type="interaction">
    <interactant intactId="EBI-716063">
        <id>Q13113</id>
    </interactant>
    <interactant intactId="EBI-10968534">
        <id>P50570-2</id>
        <label>DNM2</label>
    </interactant>
    <organismsDiffer>false</organismsDiffer>
    <experiments>3</experiments>
</comment>
<comment type="interaction">
    <interactant intactId="EBI-716063">
        <id>Q13113</id>
    </interactant>
    <interactant intactId="EBI-2820492">
        <id>Q9BV81</id>
        <label>EMC6</label>
    </interactant>
    <organismsDiffer>false</organismsDiffer>
    <experiments>3</experiments>
</comment>
<comment type="interaction">
    <interactant intactId="EBI-716063">
        <id>Q13113</id>
    </interactant>
    <interactant intactId="EBI-711490">
        <id>Q9UKR5</id>
        <label>ERG28</label>
    </interactant>
    <organismsDiffer>false</organismsDiffer>
    <experiments>3</experiments>
</comment>
<comment type="interaction">
    <interactant intactId="EBI-716063">
        <id>Q13113</id>
    </interactant>
    <interactant intactId="EBI-2876774">
        <id>Q92520</id>
        <label>FAM3C</label>
    </interactant>
    <organismsDiffer>false</organismsDiffer>
    <experiments>3</experiments>
</comment>
<comment type="interaction">
    <interactant intactId="EBI-716063">
        <id>Q13113</id>
    </interactant>
    <interactant intactId="EBI-3925203">
        <id>Q8N3T1</id>
        <label>GALNT15</label>
    </interactant>
    <organismsDiffer>false</organismsDiffer>
    <experiments>3</experiments>
</comment>
<comment type="interaction">
    <interactant intactId="EBI-716063">
        <id>Q13113</id>
    </interactant>
    <interactant intactId="EBI-3436637">
        <id>P01350</id>
        <label>GAST</label>
    </interactant>
    <organismsDiffer>false</organismsDiffer>
    <experiments>3</experiments>
</comment>
<comment type="interaction">
    <interactant intactId="EBI-716063">
        <id>Q13113</id>
    </interactant>
    <interactant intactId="EBI-6166686">
        <id>Q96F15</id>
        <label>GIMAP5</label>
    </interactant>
    <organismsDiffer>false</organismsDiffer>
    <experiments>3</experiments>
</comment>
<comment type="interaction">
    <interactant intactId="EBI-716063">
        <id>Q13113</id>
    </interactant>
    <interactant intactId="EBI-10232876">
        <id>Q14416</id>
        <label>GRM2</label>
    </interactant>
    <organismsDiffer>false</organismsDiffer>
    <experiments>3</experiments>
</comment>
<comment type="interaction">
    <interactant intactId="EBI-716063">
        <id>Q13113</id>
    </interactant>
    <interactant intactId="EBI-702665">
        <id>P02724</id>
        <label>GYPA</label>
    </interactant>
    <organismsDiffer>false</organismsDiffer>
    <experiments>3</experiments>
</comment>
<comment type="interaction">
    <interactant intactId="EBI-716063">
        <id>Q13113</id>
    </interactant>
    <interactant intactId="EBI-2806151">
        <id>P09601</id>
        <label>HMOX1</label>
    </interactant>
    <organismsDiffer>false</organismsDiffer>
    <experiments>3</experiments>
</comment>
<comment type="interaction">
    <interactant intactId="EBI-716063">
        <id>Q13113</id>
    </interactant>
    <interactant intactId="EBI-466029">
        <id>P42858</id>
        <label>HTT</label>
    </interactant>
    <organismsDiffer>false</organismsDiffer>
    <experiments>21</experiments>
</comment>
<comment type="interaction">
    <interactant intactId="EBI-716063">
        <id>Q13113</id>
    </interactant>
    <interactant intactId="EBI-11721771">
        <id>O60725</id>
        <label>ICMT</label>
    </interactant>
    <organismsDiffer>false</organismsDiffer>
    <experiments>3</experiments>
</comment>
<comment type="interaction">
    <interactant intactId="EBI-716063">
        <id>Q13113</id>
    </interactant>
    <interactant intactId="EBI-720480">
        <id>P24593</id>
        <label>IGFBP5</label>
    </interactant>
    <organismsDiffer>false</organismsDiffer>
    <experiments>3</experiments>
</comment>
<comment type="interaction">
    <interactant intactId="EBI-716063">
        <id>Q13113</id>
    </interactant>
    <interactant intactId="EBI-10266796">
        <id>Q8N5M9</id>
        <label>JAGN1</label>
    </interactant>
    <organismsDiffer>false</organismsDiffer>
    <experiments>3</experiments>
</comment>
<comment type="interaction">
    <interactant intactId="EBI-716063">
        <id>Q13113</id>
    </interactant>
    <interactant intactId="EBI-750776">
        <id>O95214</id>
        <label>LEPROTL1</label>
    </interactant>
    <organismsDiffer>false</organismsDiffer>
    <experiments>3</experiments>
</comment>
<comment type="interaction">
    <interactant intactId="EBI-716063">
        <id>Q13113</id>
    </interactant>
    <interactant intactId="EBI-2820517">
        <id>Q8TAF8</id>
        <label>LHFPL5</label>
    </interactant>
    <organismsDiffer>false</organismsDiffer>
    <experiments>3</experiments>
</comment>
<comment type="interaction">
    <interactant intactId="EBI-716063">
        <id>Q13113</id>
    </interactant>
    <interactant intactId="EBI-8449636">
        <id>P30301</id>
        <label>MIP</label>
    </interactant>
    <organismsDiffer>false</organismsDiffer>
    <experiments>3</experiments>
</comment>
<comment type="interaction">
    <interactant intactId="EBI-716063">
        <id>Q13113</id>
    </interactant>
    <interactant intactId="EBI-13301517">
        <id>Q96S97</id>
        <label>MYADM</label>
    </interactant>
    <organismsDiffer>false</organismsDiffer>
    <experiments>3</experiments>
</comment>
<comment type="interaction">
    <interactant intactId="EBI-716063">
        <id>Q13113</id>
    </interactant>
    <interactant intactId="EBI-17641390">
        <id>A6NDP7</id>
        <label>MYADML2</label>
    </interactant>
    <organismsDiffer>false</organismsDiffer>
    <experiments>3</experiments>
</comment>
<comment type="interaction">
    <interactant intactId="EBI-716063">
        <id>Q13113</id>
    </interactant>
    <interactant intactId="EBI-12051377">
        <id>Q8N912</id>
        <label>NRAC</label>
    </interactant>
    <organismsDiffer>false</organismsDiffer>
    <experiments>3</experiments>
</comment>
<comment type="interaction">
    <interactant intactId="EBI-716063">
        <id>Q13113</id>
    </interactant>
    <interactant intactId="EBI-6380741">
        <id>P42857</id>
        <label>NSG1</label>
    </interactant>
    <organismsDiffer>false</organismsDiffer>
    <experiments>3</experiments>
</comment>
<comment type="interaction">
    <interactant intactId="EBI-716063">
        <id>Q13113</id>
    </interactant>
    <interactant intactId="EBI-748974">
        <id>Q96CV9</id>
        <label>OPTN</label>
    </interactant>
    <organismsDiffer>false</organismsDiffer>
    <experiments>3</experiments>
</comment>
<comment type="interaction">
    <interactant intactId="EBI-716063">
        <id>Q13113</id>
    </interactant>
    <interactant intactId="EBI-981985">
        <id>Q9Y5Y5</id>
        <label>PEX16</label>
    </interactant>
    <organismsDiffer>false</organismsDiffer>
    <experiments>3</experiments>
</comment>
<comment type="interaction">
    <interactant intactId="EBI-716063">
        <id>Q13113</id>
    </interactant>
    <interactant intactId="EBI-12092917">
        <id>Q9UHJ9-5</id>
        <label>PGAP2</label>
    </interactant>
    <organismsDiffer>false</organismsDiffer>
    <experiments>3</experiments>
</comment>
<comment type="interaction">
    <interactant intactId="EBI-716063">
        <id>Q13113</id>
    </interactant>
    <interactant intactId="EBI-2846068">
        <id>Q9BXM7</id>
        <label>PINK1</label>
    </interactant>
    <organismsDiffer>false</organismsDiffer>
    <experiments>3</experiments>
</comment>
<comment type="interaction">
    <interactant intactId="EBI-716063">
        <id>Q13113</id>
    </interactant>
    <interactant intactId="EBI-608347">
        <id>Q04941</id>
        <label>PLP2</label>
    </interactant>
    <organismsDiffer>false</organismsDiffer>
    <experiments>3</experiments>
</comment>
<comment type="interaction">
    <interactant intactId="EBI-716063">
        <id>Q13113</id>
    </interactant>
    <interactant intactId="EBI-10485931">
        <id>Q5VZY2</id>
        <label>PLPP4</label>
    </interactant>
    <organismsDiffer>false</organismsDiffer>
    <experiments>3</experiments>
</comment>
<comment type="interaction">
    <interactant intactId="EBI-716063">
        <id>Q13113</id>
    </interactant>
    <interactant intactId="EBI-11721828">
        <id>Q8IY26</id>
        <label>PLPP6</label>
    </interactant>
    <organismsDiffer>false</organismsDiffer>
    <experiments>3</experiments>
</comment>
<comment type="interaction">
    <interactant intactId="EBI-716063">
        <id>Q13113</id>
    </interactant>
    <interactant intactId="EBI-50433196">
        <id>A0A6Q8PF08</id>
        <label>PMP22</label>
    </interactant>
    <organismsDiffer>false</organismsDiffer>
    <experiments>3</experiments>
</comment>
<comment type="interaction">
    <interactant intactId="EBI-716063">
        <id>Q13113</id>
    </interactant>
    <interactant intactId="EBI-2845982">
        <id>Q01453</id>
        <label>PMP22</label>
    </interactant>
    <organismsDiffer>false</organismsDiffer>
    <experiments>3</experiments>
</comment>
<comment type="interaction">
    <interactant intactId="EBI-716063">
        <id>Q13113</id>
    </interactant>
    <interactant intactId="EBI-21251460">
        <id>O60260-5</id>
        <label>PRKN</label>
    </interactant>
    <organismsDiffer>false</organismsDiffer>
    <experiments>6</experiments>
</comment>
<comment type="interaction">
    <interactant intactId="EBI-716063">
        <id>Q13113</id>
    </interactant>
    <interactant intactId="EBI-11047108">
        <id>P49768-2</id>
        <label>PSEN1</label>
    </interactant>
    <organismsDiffer>false</organismsDiffer>
    <experiments>6</experiments>
</comment>
<comment type="interaction">
    <interactant intactId="EBI-716063">
        <id>Q13113</id>
    </interactant>
    <interactant intactId="EBI-2010251">
        <id>P49810</id>
        <label>PSEN2</label>
    </interactant>
    <organismsDiffer>false</organismsDiffer>
    <experiments>3</experiments>
</comment>
<comment type="interaction">
    <interactant intactId="EBI-716063">
        <id>Q13113</id>
    </interactant>
    <interactant intactId="EBI-1052363">
        <id>Q9NS64</id>
        <label>RPRM</label>
    </interactant>
    <organismsDiffer>false</organismsDiffer>
    <experiments>3</experiments>
</comment>
<comment type="interaction">
    <interactant intactId="EBI-716063">
        <id>Q13113</id>
    </interactant>
    <interactant intactId="EBI-10244780">
        <id>Q5QGT7</id>
        <label>RTP2</label>
    </interactant>
    <organismsDiffer>false</organismsDiffer>
    <experiments>3</experiments>
</comment>
<comment type="interaction">
    <interactant intactId="EBI-716063">
        <id>Q13113</id>
    </interactant>
    <interactant intactId="EBI-727004">
        <id>O00560</id>
        <label>SDCBP</label>
    </interactant>
    <organismsDiffer>false</organismsDiffer>
    <experiments>3</experiments>
</comment>
<comment type="interaction">
    <interactant intactId="EBI-716063">
        <id>Q13113</id>
    </interactant>
    <interactant intactId="EBI-10197617">
        <id>P11686</id>
        <label>SFTPC</label>
    </interactant>
    <organismsDiffer>false</organismsDiffer>
    <experiments>3</experiments>
</comment>
<comment type="interaction">
    <interactant intactId="EBI-716063">
        <id>Q13113</id>
    </interactant>
    <interactant intactId="EBI-6381136">
        <id>Q96NB2</id>
        <label>SFXN2</label>
    </interactant>
    <organismsDiffer>false</organismsDiffer>
    <experiments>3</experiments>
</comment>
<comment type="interaction">
    <interactant intactId="EBI-716063">
        <id>Q13113</id>
    </interactant>
    <interactant intactId="EBI-12147661">
        <id>P78383</id>
        <label>SLC35B1</label>
    </interactant>
    <organismsDiffer>false</organismsDiffer>
    <experiments>3</experiments>
</comment>
<comment type="interaction">
    <interactant intactId="EBI-716063">
        <id>Q13113</id>
    </interactant>
    <interactant intactId="EBI-10281213">
        <id>Q969S0</id>
        <label>SLC35B4</label>
    </interactant>
    <organismsDiffer>false</organismsDiffer>
    <experiments>3</experiments>
</comment>
<comment type="interaction">
    <interactant intactId="EBI-716063">
        <id>Q13113</id>
    </interactant>
    <interactant intactId="EBI-21022766">
        <id>P31639</id>
        <label>SLC5A2</label>
    </interactant>
    <organismsDiffer>false</organismsDiffer>
    <experiments>6</experiments>
</comment>
<comment type="interaction">
    <interactant intactId="EBI-716063">
        <id>Q13113</id>
    </interactant>
    <interactant intactId="EBI-985879">
        <id>P37840</id>
        <label>SNCA</label>
    </interactant>
    <organismsDiffer>false</organismsDiffer>
    <experiments>3</experiments>
</comment>
<comment type="interaction">
    <interactant intactId="EBI-716063">
        <id>Q13113</id>
    </interactant>
    <interactant intactId="EBI-990792">
        <id>P00441</id>
        <label>SOD1</label>
    </interactant>
    <organismsDiffer>false</organismsDiffer>
    <experiments>3</experiments>
</comment>
<comment type="interaction">
    <interactant intactId="EBI-716063">
        <id>Q13113</id>
    </interactant>
    <interactant intactId="EBI-12200293">
        <id>P0DN84</id>
        <label>STRIT1</label>
    </interactant>
    <organismsDiffer>false</organismsDiffer>
    <experiments>3</experiments>
</comment>
<comment type="interaction">
    <interactant intactId="EBI-716063">
        <id>Q13113</id>
    </interactant>
    <interactant intactId="EBI-2691717">
        <id>Q86Y82</id>
        <label>STX12</label>
    </interactant>
    <organismsDiffer>false</organismsDiffer>
    <experiments>3</experiments>
</comment>
<comment type="interaction">
    <interactant intactId="EBI-716063">
        <id>Q13113</id>
    </interactant>
    <interactant intactId="EBI-941422">
        <id>P07204</id>
        <label>THBD</label>
    </interactant>
    <organismsDiffer>false</organismsDiffer>
    <experiments>3</experiments>
</comment>
<comment type="interaction">
    <interactant intactId="EBI-716063">
        <id>Q13113</id>
    </interactant>
    <interactant intactId="EBI-3922699">
        <id>Q96IK0</id>
        <label>TMEM101</label>
    </interactant>
    <organismsDiffer>false</organismsDiffer>
    <experiments>3</experiments>
</comment>
<comment type="interaction">
    <interactant intactId="EBI-716063">
        <id>Q13113</id>
    </interactant>
    <interactant intactId="EBI-12845616">
        <id>Q6UX40</id>
        <label>TMEM107</label>
    </interactant>
    <organismsDiffer>false</organismsDiffer>
    <experiments>3</experiments>
</comment>
<comment type="interaction">
    <interactant intactId="EBI-716063">
        <id>Q13113</id>
    </interactant>
    <interactant intactId="EBI-1057733">
        <id>Q9BVC6</id>
        <label>TMEM109</label>
    </interactant>
    <organismsDiffer>false</organismsDiffer>
    <experiments>3</experiments>
</comment>
<comment type="interaction">
    <interactant intactId="EBI-716063">
        <id>Q13113</id>
    </interactant>
    <interactant intactId="EBI-723946">
        <id>P17152</id>
        <label>TMEM11</label>
    </interactant>
    <organismsDiffer>false</organismsDiffer>
    <experiments>3</experiments>
</comment>
<comment type="interaction">
    <interactant intactId="EBI-716063">
        <id>Q13113</id>
    </interactant>
    <interactant intactId="EBI-2844246">
        <id>Q9NV12</id>
        <label>TMEM140</label>
    </interactant>
    <organismsDiffer>false</organismsDiffer>
    <experiments>3</experiments>
</comment>
<comment type="interaction">
    <interactant intactId="EBI-716063">
        <id>Q13113</id>
    </interactant>
    <interactant intactId="EBI-2800360">
        <id>Q9Y6G1</id>
        <label>TMEM14A</label>
    </interactant>
    <organismsDiffer>false</organismsDiffer>
    <experiments>3</experiments>
</comment>
<comment type="interaction">
    <interactant intactId="EBI-716063">
        <id>Q13113</id>
    </interactant>
    <interactant intactId="EBI-8638294">
        <id>Q9NUH8</id>
        <label>TMEM14B</label>
    </interactant>
    <organismsDiffer>false</organismsDiffer>
    <experiments>3</experiments>
</comment>
<comment type="interaction">
    <interactant intactId="EBI-716063">
        <id>Q13113</id>
    </interactant>
    <interactant intactId="EBI-2339195">
        <id>Q9P0S9</id>
        <label>TMEM14C</label>
    </interactant>
    <organismsDiffer>false</organismsDiffer>
    <experiments>3</experiments>
</comment>
<comment type="interaction">
    <interactant intactId="EBI-716063">
        <id>Q13113</id>
    </interactant>
    <interactant intactId="EBI-12274070">
        <id>Q969S6</id>
        <label>TMEM203</label>
    </interactant>
    <organismsDiffer>false</organismsDiffer>
    <experiments>3</experiments>
</comment>
<comment type="interaction">
    <interactant intactId="EBI-716063">
        <id>Q13113</id>
    </interactant>
    <interactant intactId="EBI-17572471">
        <id>Q9GZU3-4</id>
        <label>TMEM39B</label>
    </interactant>
    <organismsDiffer>false</organismsDiffer>
    <experiments>3</experiments>
</comment>
<comment type="interaction">
    <interactant intactId="EBI-716063">
        <id>Q13113</id>
    </interactant>
    <interactant intactId="EBI-6656213">
        <id>Q6PI78</id>
        <label>TMEM65</label>
    </interactant>
    <organismsDiffer>false</organismsDiffer>
    <experiments>3</experiments>
</comment>
<comment type="interaction">
    <interactant intactId="EBI-716063">
        <id>Q13113</id>
    </interactant>
    <interactant intactId="EBI-12015604">
        <id>Q8N2M4</id>
        <label>TMEM86A</label>
    </interactant>
    <organismsDiffer>false</organismsDiffer>
    <experiments>3</experiments>
</comment>
<comment type="interaction">
    <interactant intactId="EBI-716063">
        <id>Q13113</id>
    </interactant>
    <interactant intactId="EBI-12111910">
        <id>Q5BJF2</id>
        <label>TMEM97</label>
    </interactant>
    <organismsDiffer>false</organismsDiffer>
    <experiments>3</experiments>
</comment>
<comment type="interaction">
    <interactant intactId="EBI-716063">
        <id>Q13113</id>
    </interactant>
    <interactant intactId="EBI-717441">
        <id>O14798</id>
        <label>TNFRSF10C</label>
    </interactant>
    <organismsDiffer>false</organismsDiffer>
    <experiments>3</experiments>
</comment>
<comment type="interaction">
    <interactant intactId="EBI-716063">
        <id>Q13113</id>
    </interactant>
    <interactant intactId="EBI-25847109">
        <id>O14656-2</id>
        <label>TOR1A</label>
    </interactant>
    <organismsDiffer>false</organismsDiffer>
    <experiments>3</experiments>
</comment>
<comment type="interaction">
    <interactant intactId="EBI-716063">
        <id>Q13113</id>
    </interactant>
    <interactant intactId="EBI-12195249">
        <id>Q5TGU0</id>
        <label>TSPO2</label>
    </interactant>
    <organismsDiffer>false</organismsDiffer>
    <experiments>3</experiments>
</comment>
<comment type="interaction">
    <interactant intactId="EBI-716063">
        <id>Q13113</id>
    </interactant>
    <interactant intactId="EBI-11988865">
        <id>A5PKU2</id>
        <label>TUSC5</label>
    </interactant>
    <organismsDiffer>false</organismsDiffer>
    <experiments>3</experiments>
</comment>
<comment type="interaction">
    <interactant intactId="EBI-716063">
        <id>Q13113</id>
    </interactant>
    <interactant intactId="EBI-714860">
        <id>P09936</id>
        <label>UCHL1</label>
    </interactant>
    <organismsDiffer>false</organismsDiffer>
    <experiments>3</experiments>
</comment>
<comment type="interaction">
    <interactant intactId="EBI-716063">
        <id>Q13113</id>
    </interactant>
    <interactant intactId="EBI-12237619">
        <id>O75841</id>
        <label>UPK1B</label>
    </interactant>
    <organismsDiffer>false</organismsDiffer>
    <experiments>3</experiments>
</comment>
<comment type="interaction">
    <interactant intactId="EBI-716063">
        <id>Q13113</id>
    </interactant>
    <interactant intactId="EBI-722343">
        <id>Q15836</id>
        <label>VAMP3</label>
    </interactant>
    <organismsDiffer>false</organismsDiffer>
    <experiments>3</experiments>
</comment>
<comment type="interaction">
    <interactant intactId="EBI-716063">
        <id>Q13113</id>
    </interactant>
    <interactant intactId="EBI-751210">
        <id>Q96EC8</id>
        <label>YIPF6</label>
    </interactant>
    <organismsDiffer>false</organismsDiffer>
    <experiments>3</experiments>
</comment>
<comment type="subcellular location">
    <subcellularLocation>
        <location evidence="10 11 12 13">Apical cell membrane</location>
        <topology evidence="3 4 5">Single-pass membrane protein</topology>
    </subcellularLocation>
</comment>
<comment type="similarity">
    <text evidence="9">Belongs to the PDZK1-interacting protein 1/SMIM24 family.</text>
</comment>
<comment type="online information" name="Atlas of Genetics and Cytogenetics in Oncology and Haematology">
    <link uri="https://atlasgeneticsoncology.org/gene/41268/PDZK1IP1"/>
</comment>
<sequence length="114" mass="12227">MSALSLLILGLLTAVPPASCQQGLGNLQPWMQGLIAVAVFLVLVAIAFAVNHFWCQEEPEPAHMILTVGNKADGVLVGTDGRYSSMAASFRSSEHENAYENVPEEEGKVRSTPM</sequence>